<organism>
    <name type="scientific">Saccharomyces cerevisiae (strain ATCC 204508 / S288c)</name>
    <name type="common">Baker's yeast</name>
    <dbReference type="NCBI Taxonomy" id="559292"/>
    <lineage>
        <taxon>Eukaryota</taxon>
        <taxon>Fungi</taxon>
        <taxon>Dikarya</taxon>
        <taxon>Ascomycota</taxon>
        <taxon>Saccharomycotina</taxon>
        <taxon>Saccharomycetes</taxon>
        <taxon>Saccharomycetales</taxon>
        <taxon>Saccharomycetaceae</taxon>
        <taxon>Saccharomyces</taxon>
    </lineage>
</organism>
<dbReference type="EMBL" id="Z49701">
    <property type="protein sequence ID" value="CAA89725.1"/>
    <property type="molecule type" value="Genomic_DNA"/>
</dbReference>
<dbReference type="EMBL" id="AY723782">
    <property type="protein sequence ID" value="AAU09699.1"/>
    <property type="molecule type" value="Genomic_DNA"/>
</dbReference>
<dbReference type="EMBL" id="BK006938">
    <property type="protein sequence ID" value="DAA12080.1"/>
    <property type="molecule type" value="Genomic_DNA"/>
</dbReference>
<dbReference type="PIR" id="S54535">
    <property type="entry name" value="S54535"/>
</dbReference>
<dbReference type="RefSeq" id="NP_010525.1">
    <property type="nucleotide sequence ID" value="NM_001180547.1"/>
</dbReference>
<dbReference type="BioGRID" id="32290">
    <property type="interactions" value="69"/>
</dbReference>
<dbReference type="DIP" id="DIP-6495N"/>
<dbReference type="FunCoup" id="Q03780">
    <property type="interactions" value="160"/>
</dbReference>
<dbReference type="IntAct" id="Q03780">
    <property type="interactions" value="26"/>
</dbReference>
<dbReference type="MINT" id="Q03780"/>
<dbReference type="STRING" id="4932.YDR239C"/>
<dbReference type="GlyGen" id="Q03780">
    <property type="glycosylation" value="1 site, 1 O-linked glycan (1 site)"/>
</dbReference>
<dbReference type="iPTMnet" id="Q03780"/>
<dbReference type="PaxDb" id="4932-YDR239C"/>
<dbReference type="PeptideAtlas" id="Q03780"/>
<dbReference type="EnsemblFungi" id="YDR239C_mRNA">
    <property type="protein sequence ID" value="YDR239C"/>
    <property type="gene ID" value="YDR239C"/>
</dbReference>
<dbReference type="GeneID" id="851825"/>
<dbReference type="KEGG" id="sce:YDR239C"/>
<dbReference type="AGR" id="SGD:S000002647"/>
<dbReference type="SGD" id="S000002647">
    <property type="gene designation" value="YDR239C"/>
</dbReference>
<dbReference type="VEuPathDB" id="FungiDB:YDR239C"/>
<dbReference type="eggNOG" id="ENOG502QSS3">
    <property type="taxonomic scope" value="Eukaryota"/>
</dbReference>
<dbReference type="HOGENOM" id="CLU_017547_0_0_1"/>
<dbReference type="InParanoid" id="Q03780"/>
<dbReference type="OMA" id="HRRIFRV"/>
<dbReference type="OrthoDB" id="4067613at2759"/>
<dbReference type="BioCyc" id="YEAST:G3O-29814-MONOMER"/>
<dbReference type="BioGRID-ORCS" id="851825">
    <property type="hits" value="3 hits in 10 CRISPR screens"/>
</dbReference>
<dbReference type="PRO" id="PR:Q03780"/>
<dbReference type="Proteomes" id="UP000002311">
    <property type="component" value="Chromosome IV"/>
</dbReference>
<dbReference type="RNAct" id="Q03780">
    <property type="molecule type" value="protein"/>
</dbReference>
<dbReference type="GO" id="GO:0005737">
    <property type="term" value="C:cytoplasm"/>
    <property type="evidence" value="ECO:0007005"/>
    <property type="project" value="SGD"/>
</dbReference>
<sequence>MFDGFSNNKGKRRSFFRFGSESKNNDSEKSVRKPSVPSTIKKSTNIARTSTAETSAPDIPPRSPNRNAHSRSHSIQAPLQKETLKNTNPFLNAEDTLGDSLELTQSKEASGNDHKGIEYLQENNIIGQRTNPFTTSANSNAHFSKIKRSRPPPPPMDMKSITTSISNNTTKEEIESNNDSERDSIAISSTHNQHRRQRSEAEKLVDDIENYINEHKVSSGSSLSLDTSENSDTKASQDKLPVDVMEAPILRNVSAESSLSYVKPLIVDNEEVNKASNGNLVQSDHLKEFSSNLDDGDDKFSFSTSASGKSTKSLQQVSKDESSGFKAAHFDFAYKSNEHLGSDGSIASARKPLRITNEIDSGSSNEDDDDGLQEKGFVDSESKAFINYASDQGSSIKNDVSTQEPELPSHRRIFRVVNEDRPSFYLNSVNDTGSLTDKHSFDTASSGEYDAKSNFSSQSGLSISKGSKSTVLAALDSNGNTKSSNKTSELNSLNSISESLVPAAHSFNEHTVTIPATVDLPNPVHDAPSERSVKCSPLTSVVSNKSEKSVPLVSSYVEELRLKYYKTSNFLQAPPNLPVALKQKNNLIQPKNIKVKLRTSSKQIGIKHGKVKQKLLALETRNEESDGTATGLKNKINVDHTKEFHKLLGKENETGSISKKEGTDAEQAEDYLKDIPGDEAYNSDDIMAPLREKRGQNGSVDSVSRSNTVVSYYTRSQNRMRSGTLDNDYVNRQKLPTHISLQDYRDANARSNISRQDSVSTTNSDVVDLSYSLGHGLRVANPDSDPE</sequence>
<gene>
    <name type="ordered locus">YDR239C</name>
</gene>
<accession>Q03780</accession>
<accession>D6VSM0</accession>
<comment type="interaction">
    <interactant intactId="EBI-30094">
        <id>Q03780</id>
    </interactant>
    <interactant intactId="EBI-3719">
        <id>P38041</id>
        <label>BOI1</label>
    </interactant>
    <organismsDiffer>false</organismsDiffer>
    <experiments>2</experiments>
</comment>
<comment type="interaction">
    <interactant intactId="EBI-30094">
        <id>Q03780</id>
    </interactant>
    <interactant intactId="EBI-3727">
        <id>P39969</id>
        <label>BOI2</label>
    </interactant>
    <organismsDiffer>false</organismsDiffer>
    <experiments>2</experiments>
</comment>
<comment type="interaction">
    <interactant intactId="EBI-30094">
        <id>Q03780</id>
    </interactant>
    <interactant intactId="EBI-14500">
        <id>P39743</id>
        <label>RVS167</label>
    </interactant>
    <organismsDiffer>false</organismsDiffer>
    <experiments>2</experiments>
</comment>
<comment type="subcellular location">
    <subcellularLocation>
        <location evidence="2">Cytoplasm</location>
    </subcellularLocation>
</comment>
<comment type="miscellaneous">
    <text evidence="3">Present with 155 molecules/cell in log phase SD medium.</text>
</comment>
<protein>
    <recommendedName>
        <fullName>Uncharacterized protein YDR239C</fullName>
    </recommendedName>
</protein>
<proteinExistence type="evidence at protein level"/>
<keyword id="KW-0007">Acetylation</keyword>
<keyword id="KW-0963">Cytoplasm</keyword>
<keyword id="KW-0597">Phosphoprotein</keyword>
<keyword id="KW-1185">Reference proteome</keyword>
<feature type="chain" id="PRO_0000253839" description="Uncharacterized protein YDR239C">
    <location>
        <begin position="1"/>
        <end position="787"/>
    </location>
</feature>
<feature type="region of interest" description="Disordered" evidence="1">
    <location>
        <begin position="1"/>
        <end position="115"/>
    </location>
</feature>
<feature type="region of interest" description="Disordered" evidence="1">
    <location>
        <begin position="130"/>
        <end position="200"/>
    </location>
</feature>
<feature type="region of interest" description="Disordered" evidence="1">
    <location>
        <begin position="217"/>
        <end position="238"/>
    </location>
</feature>
<feature type="compositionally biased region" description="Polar residues" evidence="1">
    <location>
        <begin position="36"/>
        <end position="54"/>
    </location>
</feature>
<feature type="compositionally biased region" description="Polar residues" evidence="1">
    <location>
        <begin position="130"/>
        <end position="142"/>
    </location>
</feature>
<feature type="compositionally biased region" description="Low complexity" evidence="1">
    <location>
        <begin position="160"/>
        <end position="169"/>
    </location>
</feature>
<feature type="compositionally biased region" description="Basic and acidic residues" evidence="1">
    <location>
        <begin position="170"/>
        <end position="184"/>
    </location>
</feature>
<feature type="compositionally biased region" description="Low complexity" evidence="1">
    <location>
        <begin position="218"/>
        <end position="230"/>
    </location>
</feature>
<feature type="modified residue" description="N-acetylmethionine" evidence="7">
    <location>
        <position position="1"/>
    </location>
</feature>
<feature type="modified residue" description="Phosphoserine" evidence="5">
    <location>
        <position position="63"/>
    </location>
</feature>
<feature type="modified residue" description="Phosphoserine" evidence="5 6">
    <location>
        <position position="254"/>
    </location>
</feature>
<feature type="modified residue" description="Phosphoserine" evidence="5">
    <location>
        <position position="313"/>
    </location>
</feature>
<feature type="modified residue" description="Phosphoserine" evidence="5 6">
    <location>
        <position position="342"/>
    </location>
</feature>
<feature type="modified residue" description="Phosphoserine" evidence="5 6">
    <location>
        <position position="345"/>
    </location>
</feature>
<feature type="modified residue" description="Phosphoserine" evidence="5">
    <location>
        <position position="390"/>
    </location>
</feature>
<feature type="modified residue" description="Phosphoserine" evidence="4">
    <location>
        <position position="477"/>
    </location>
</feature>
<feature type="modified residue" description="Phosphoserine" evidence="5">
    <location>
        <position position="492"/>
    </location>
</feature>
<feature type="modified residue" description="Phosphoserine" evidence="6">
    <location>
        <position position="546"/>
    </location>
</feature>
<feature type="modified residue" description="Phosphoserine" evidence="6">
    <location>
        <position position="683"/>
    </location>
</feature>
<feature type="modified residue" description="Phosphoserine" evidence="5">
    <location>
        <position position="699"/>
    </location>
</feature>
<evidence type="ECO:0000256" key="1">
    <source>
        <dbReference type="SAM" id="MobiDB-lite"/>
    </source>
</evidence>
<evidence type="ECO:0000269" key="2">
    <source>
    </source>
</evidence>
<evidence type="ECO:0000269" key="3">
    <source>
    </source>
</evidence>
<evidence type="ECO:0007744" key="4">
    <source>
    </source>
</evidence>
<evidence type="ECO:0007744" key="5">
    <source>
    </source>
</evidence>
<evidence type="ECO:0007744" key="6">
    <source>
    </source>
</evidence>
<evidence type="ECO:0007744" key="7">
    <source>
    </source>
</evidence>
<name>YD239_YEAST</name>
<reference key="1">
    <citation type="journal article" date="1997" name="Nature">
        <title>The nucleotide sequence of Saccharomyces cerevisiae chromosome IV.</title>
        <authorList>
            <person name="Jacq C."/>
            <person name="Alt-Moerbe J."/>
            <person name="Andre B."/>
            <person name="Arnold W."/>
            <person name="Bahr A."/>
            <person name="Ballesta J.P.G."/>
            <person name="Bargues M."/>
            <person name="Baron L."/>
            <person name="Becker A."/>
            <person name="Biteau N."/>
            <person name="Bloecker H."/>
            <person name="Blugeon C."/>
            <person name="Boskovic J."/>
            <person name="Brandt P."/>
            <person name="Brueckner M."/>
            <person name="Buitrago M.J."/>
            <person name="Coster F."/>
            <person name="Delaveau T."/>
            <person name="del Rey F."/>
            <person name="Dujon B."/>
            <person name="Eide L.G."/>
            <person name="Garcia-Cantalejo J.M."/>
            <person name="Goffeau A."/>
            <person name="Gomez-Peris A."/>
            <person name="Granotier C."/>
            <person name="Hanemann V."/>
            <person name="Hankeln T."/>
            <person name="Hoheisel J.D."/>
            <person name="Jaeger W."/>
            <person name="Jimenez A."/>
            <person name="Jonniaux J.-L."/>
            <person name="Kraemer C."/>
            <person name="Kuester H."/>
            <person name="Laamanen P."/>
            <person name="Legros Y."/>
            <person name="Louis E.J."/>
            <person name="Moeller-Rieker S."/>
            <person name="Monnet A."/>
            <person name="Moro M."/>
            <person name="Mueller-Auer S."/>
            <person name="Nussbaumer B."/>
            <person name="Paricio N."/>
            <person name="Paulin L."/>
            <person name="Perea J."/>
            <person name="Perez-Alonso M."/>
            <person name="Perez-Ortin J.E."/>
            <person name="Pohl T.M."/>
            <person name="Prydz H."/>
            <person name="Purnelle B."/>
            <person name="Rasmussen S.W."/>
            <person name="Remacha M.A."/>
            <person name="Revuelta J.L."/>
            <person name="Rieger M."/>
            <person name="Salom D."/>
            <person name="Saluz H.P."/>
            <person name="Saiz J.E."/>
            <person name="Saren A.-M."/>
            <person name="Schaefer M."/>
            <person name="Scharfe M."/>
            <person name="Schmidt E.R."/>
            <person name="Schneider C."/>
            <person name="Scholler P."/>
            <person name="Schwarz S."/>
            <person name="Soler-Mira A."/>
            <person name="Urrestarazu L.A."/>
            <person name="Verhasselt P."/>
            <person name="Vissers S."/>
            <person name="Voet M."/>
            <person name="Volckaert G."/>
            <person name="Wagner G."/>
            <person name="Wambutt R."/>
            <person name="Wedler E."/>
            <person name="Wedler H."/>
            <person name="Woelfl S."/>
            <person name="Harris D.E."/>
            <person name="Bowman S."/>
            <person name="Brown D."/>
            <person name="Churcher C.M."/>
            <person name="Connor R."/>
            <person name="Dedman K."/>
            <person name="Gentles S."/>
            <person name="Hamlin N."/>
            <person name="Hunt S."/>
            <person name="Jones L."/>
            <person name="McDonald S."/>
            <person name="Murphy L.D."/>
            <person name="Niblett D."/>
            <person name="Odell C."/>
            <person name="Oliver K."/>
            <person name="Rajandream M.A."/>
            <person name="Richards C."/>
            <person name="Shore L."/>
            <person name="Walsh S.V."/>
            <person name="Barrell B.G."/>
            <person name="Dietrich F.S."/>
            <person name="Mulligan J.T."/>
            <person name="Allen E."/>
            <person name="Araujo R."/>
            <person name="Aviles E."/>
            <person name="Berno A."/>
            <person name="Carpenter J."/>
            <person name="Chen E."/>
            <person name="Cherry J.M."/>
            <person name="Chung E."/>
            <person name="Duncan M."/>
            <person name="Hunicke-Smith S."/>
            <person name="Hyman R.W."/>
            <person name="Komp C."/>
            <person name="Lashkari D."/>
            <person name="Lew H."/>
            <person name="Lin D."/>
            <person name="Mosedale D."/>
            <person name="Nakahara K."/>
            <person name="Namath A."/>
            <person name="Oefner P."/>
            <person name="Oh C."/>
            <person name="Petel F.X."/>
            <person name="Roberts D."/>
            <person name="Schramm S."/>
            <person name="Schroeder M."/>
            <person name="Shogren T."/>
            <person name="Shroff N."/>
            <person name="Winant A."/>
            <person name="Yelton M.A."/>
            <person name="Botstein D."/>
            <person name="Davis R.W."/>
            <person name="Johnston M."/>
            <person name="Andrews S."/>
            <person name="Brinkman R."/>
            <person name="Cooper J."/>
            <person name="Ding H."/>
            <person name="Du Z."/>
            <person name="Favello A."/>
            <person name="Fulton L."/>
            <person name="Gattung S."/>
            <person name="Greco T."/>
            <person name="Hallsworth K."/>
            <person name="Hawkins J."/>
            <person name="Hillier L.W."/>
            <person name="Jier M."/>
            <person name="Johnson D."/>
            <person name="Johnston L."/>
            <person name="Kirsten J."/>
            <person name="Kucaba T."/>
            <person name="Langston Y."/>
            <person name="Latreille P."/>
            <person name="Le T."/>
            <person name="Mardis E."/>
            <person name="Menezes S."/>
            <person name="Miller N."/>
            <person name="Nhan M."/>
            <person name="Pauley A."/>
            <person name="Peluso D."/>
            <person name="Rifkin L."/>
            <person name="Riles L."/>
            <person name="Taich A."/>
            <person name="Trevaskis E."/>
            <person name="Vignati D."/>
            <person name="Wilcox L."/>
            <person name="Wohldman P."/>
            <person name="Vaudin M."/>
            <person name="Wilson R."/>
            <person name="Waterston R."/>
            <person name="Albermann K."/>
            <person name="Hani J."/>
            <person name="Heumann K."/>
            <person name="Kleine K."/>
            <person name="Mewes H.-W."/>
            <person name="Zollner A."/>
            <person name="Zaccaria P."/>
        </authorList>
    </citation>
    <scope>NUCLEOTIDE SEQUENCE [LARGE SCALE GENOMIC DNA]</scope>
    <source>
        <strain>ATCC 204508 / S288c</strain>
    </source>
</reference>
<reference key="2">
    <citation type="journal article" date="2014" name="G3 (Bethesda)">
        <title>The reference genome sequence of Saccharomyces cerevisiae: Then and now.</title>
        <authorList>
            <person name="Engel S.R."/>
            <person name="Dietrich F.S."/>
            <person name="Fisk D.G."/>
            <person name="Binkley G."/>
            <person name="Balakrishnan R."/>
            <person name="Costanzo M.C."/>
            <person name="Dwight S.S."/>
            <person name="Hitz B.C."/>
            <person name="Karra K."/>
            <person name="Nash R.S."/>
            <person name="Weng S."/>
            <person name="Wong E.D."/>
            <person name="Lloyd P."/>
            <person name="Skrzypek M.S."/>
            <person name="Miyasato S.R."/>
            <person name="Simison M."/>
            <person name="Cherry J.M."/>
        </authorList>
    </citation>
    <scope>GENOME REANNOTATION</scope>
    <source>
        <strain>ATCC 204508 / S288c</strain>
    </source>
</reference>
<reference key="3">
    <citation type="journal article" date="2007" name="Genome Res.">
        <title>Approaching a complete repository of sequence-verified protein-encoding clones for Saccharomyces cerevisiae.</title>
        <authorList>
            <person name="Hu Y."/>
            <person name="Rolfs A."/>
            <person name="Bhullar B."/>
            <person name="Murthy T.V.S."/>
            <person name="Zhu C."/>
            <person name="Berger M.F."/>
            <person name="Camargo A.A."/>
            <person name="Kelley F."/>
            <person name="McCarron S."/>
            <person name="Jepson D."/>
            <person name="Richardson A."/>
            <person name="Raphael J."/>
            <person name="Moreira D."/>
            <person name="Taycher E."/>
            <person name="Zuo D."/>
            <person name="Mohr S."/>
            <person name="Kane M.F."/>
            <person name="Williamson J."/>
            <person name="Simpson A.J.G."/>
            <person name="Bulyk M.L."/>
            <person name="Harlow E."/>
            <person name="Marsischky G."/>
            <person name="Kolodner R.D."/>
            <person name="LaBaer J."/>
        </authorList>
    </citation>
    <scope>NUCLEOTIDE SEQUENCE [GENOMIC DNA]</scope>
    <source>
        <strain>ATCC 204508 / S288c</strain>
    </source>
</reference>
<reference key="4">
    <citation type="journal article" date="2003" name="Nature">
        <title>Global analysis of protein localization in budding yeast.</title>
        <authorList>
            <person name="Huh W.-K."/>
            <person name="Falvo J.V."/>
            <person name="Gerke L.C."/>
            <person name="Carroll A.S."/>
            <person name="Howson R.W."/>
            <person name="Weissman J.S."/>
            <person name="O'Shea E.K."/>
        </authorList>
    </citation>
    <scope>SUBCELLULAR LOCATION [LARGE SCALE ANALYSIS]</scope>
</reference>
<reference key="5">
    <citation type="journal article" date="2003" name="Nature">
        <title>Global analysis of protein expression in yeast.</title>
        <authorList>
            <person name="Ghaemmaghami S."/>
            <person name="Huh W.-K."/>
            <person name="Bower K."/>
            <person name="Howson R.W."/>
            <person name="Belle A."/>
            <person name="Dephoure N."/>
            <person name="O'Shea E.K."/>
            <person name="Weissman J.S."/>
        </authorList>
    </citation>
    <scope>LEVEL OF PROTEIN EXPRESSION [LARGE SCALE ANALYSIS]</scope>
</reference>
<reference key="6">
    <citation type="journal article" date="2007" name="J. Proteome Res.">
        <title>Large-scale phosphorylation analysis of alpha-factor-arrested Saccharomyces cerevisiae.</title>
        <authorList>
            <person name="Li X."/>
            <person name="Gerber S.A."/>
            <person name="Rudner A.D."/>
            <person name="Beausoleil S.A."/>
            <person name="Haas W."/>
            <person name="Villen J."/>
            <person name="Elias J.E."/>
            <person name="Gygi S.P."/>
        </authorList>
    </citation>
    <scope>PHOSPHORYLATION [LARGE SCALE ANALYSIS] AT SER-477</scope>
    <scope>IDENTIFICATION BY MASS SPECTROMETRY [LARGE SCALE ANALYSIS]</scope>
    <source>
        <strain>ADR376</strain>
    </source>
</reference>
<reference key="7">
    <citation type="journal article" date="2008" name="Mol. Cell. Proteomics">
        <title>A multidimensional chromatography technology for in-depth phosphoproteome analysis.</title>
        <authorList>
            <person name="Albuquerque C.P."/>
            <person name="Smolka M.B."/>
            <person name="Payne S.H."/>
            <person name="Bafna V."/>
            <person name="Eng J."/>
            <person name="Zhou H."/>
        </authorList>
    </citation>
    <scope>PHOSPHORYLATION [LARGE SCALE ANALYSIS] AT SER-63; SER-254; SER-313; SER-342; SER-345; SER-390; SER-492 AND SER-699</scope>
    <scope>IDENTIFICATION BY MASS SPECTROMETRY [LARGE SCALE ANALYSIS]</scope>
</reference>
<reference key="8">
    <citation type="journal article" date="2009" name="Science">
        <title>Global analysis of Cdk1 substrate phosphorylation sites provides insights into evolution.</title>
        <authorList>
            <person name="Holt L.J."/>
            <person name="Tuch B.B."/>
            <person name="Villen J."/>
            <person name="Johnson A.D."/>
            <person name="Gygi S.P."/>
            <person name="Morgan D.O."/>
        </authorList>
    </citation>
    <scope>PHOSPHORYLATION [LARGE SCALE ANALYSIS] AT SER-254; SER-342; SER-345; SER-546 AND SER-683</scope>
    <scope>IDENTIFICATION BY MASS SPECTROMETRY [LARGE SCALE ANALYSIS]</scope>
</reference>
<reference key="9">
    <citation type="journal article" date="2012" name="Proc. Natl. Acad. Sci. U.S.A.">
        <title>N-terminal acetylome analyses and functional insights of the N-terminal acetyltransferase NatB.</title>
        <authorList>
            <person name="Van Damme P."/>
            <person name="Lasa M."/>
            <person name="Polevoda B."/>
            <person name="Gazquez C."/>
            <person name="Elosegui-Artola A."/>
            <person name="Kim D.S."/>
            <person name="De Juan-Pardo E."/>
            <person name="Demeyer K."/>
            <person name="Hole K."/>
            <person name="Larrea E."/>
            <person name="Timmerman E."/>
            <person name="Prieto J."/>
            <person name="Arnesen T."/>
            <person name="Sherman F."/>
            <person name="Gevaert K."/>
            <person name="Aldabe R."/>
        </authorList>
    </citation>
    <scope>ACETYLATION [LARGE SCALE ANALYSIS] AT MET-1</scope>
    <scope>IDENTIFICATION BY MASS SPECTROMETRY [LARGE SCALE ANALYSIS]</scope>
</reference>